<evidence type="ECO:0000250" key="1">
    <source>
        <dbReference type="UniProtKB" id="P0CC17"/>
    </source>
</evidence>
<evidence type="ECO:0000250" key="2">
    <source>
        <dbReference type="UniProtKB" id="P81382"/>
    </source>
</evidence>
<evidence type="ECO:0000255" key="3"/>
<evidence type="ECO:0000269" key="4">
    <source>
    </source>
</evidence>
<evidence type="ECO:0000303" key="5">
    <source>
    </source>
</evidence>
<evidence type="ECO:0000305" key="6"/>
<evidence type="ECO:0000305" key="7">
    <source>
    </source>
</evidence>
<reference key="1">
    <citation type="journal article" date="2007" name="Toxicon">
        <title>Molecular characterization of L-amino acid oxidase from king cobra venom.</title>
        <authorList>
            <person name="Jin Y."/>
            <person name="Lee W.-H."/>
            <person name="Zeng L."/>
            <person name="Zhang Y."/>
        </authorList>
    </citation>
    <scope>NUCLEOTIDE SEQUENCE [MRNA]</scope>
    <source>
        <tissue>Venom gland</tissue>
    </source>
</reference>
<reference key="2">
    <citation type="journal article" date="2009" name="Toxicon">
        <title>Purification, characterization and biological activities of the L-amino acid oxidase from Bungarus fasciatus snake venom.</title>
        <authorList>
            <person name="Wei J.-F."/>
            <person name="Yang H.-W."/>
            <person name="Wei X.-L."/>
            <person name="Qiao L.-Y."/>
            <person name="Wang W.-Y."/>
            <person name="He S.-H."/>
        </authorList>
    </citation>
    <scope>PROTEIN SEQUENCE OF 20-36</scope>
    <scope>FUNCTION</scope>
    <scope>CATALYTIC ACTIVITY</scope>
    <scope>BIOPHYSICOCHEMICAL PROPERTIES</scope>
    <scope>SUBUNIT</scope>
    <scope>SUBCELLULAR LOCATION</scope>
    <scope>SUBSTRATE SPECIFICITY</scope>
    <source>
        <tissue>Venom</tissue>
    </source>
</reference>
<sequence>MNVFSIFSLVFLAAFGSCADDRRSALEECFREADYEEFLEIARNGLKKTSNPKHVVVVGAGMAGLSAAYVLAGAGHRVTLLEASDRVGGRVNTYRDEKEGWYVNMGPMRLPERHRIVRTYIAKFGLKLNEFFQENENAWYFIRNIRKRVWEVKKDPGVFKYPVKPSEEGKSASQLYRESLKKVIEELKRTNCSYILDKYDTYSTKEYLIKEGNLSRGAVDMIGDLLNEDSSYYLSFIESLKNDDLFSYEKRFDEISDGFDQLPKSMHQAIAEMVHLNAQVIKIQRDAEKVRVAYQTPAKTLSYVTADYVIVCATSRAVRRISFEPPLPPKKAHALRSIHYKSATKIFLTCTRKFWEADGIHGGKSTTDLPSRFIYYPNHNFTSGVGVIVAYVLADDSDFFQALDIKTSADIVINDLSLIHQLPKNEIQALCYPSLIKKWSLDKYTMGALTSFTPYQFQDYIETVAAPVGRIYFAGEYTATVHGWLDSTIKSGLTAARNVNRASQKPSRIHLINDNQL</sequence>
<name>OXLA_BUNFA</name>
<dbReference type="EC" id="1.4.3.2" evidence="4"/>
<dbReference type="EMBL" id="EF080833">
    <property type="protein sequence ID" value="ABN72540.1"/>
    <property type="molecule type" value="mRNA"/>
</dbReference>
<dbReference type="SMR" id="A8QL52"/>
<dbReference type="BRENDA" id="1.4.3.2">
    <property type="organism ID" value="1026"/>
</dbReference>
<dbReference type="SABIO-RK" id="A8QL52"/>
<dbReference type="GO" id="GO:0005576">
    <property type="term" value="C:extracellular region"/>
    <property type="evidence" value="ECO:0007669"/>
    <property type="project" value="UniProtKB-SubCell"/>
</dbReference>
<dbReference type="GO" id="GO:0050025">
    <property type="term" value="F:L-glutamate oxidase activity"/>
    <property type="evidence" value="ECO:0007669"/>
    <property type="project" value="RHEA"/>
</dbReference>
<dbReference type="GO" id="GO:0050029">
    <property type="term" value="F:L-lysine oxidase activity"/>
    <property type="evidence" value="ECO:0007669"/>
    <property type="project" value="RHEA"/>
</dbReference>
<dbReference type="GO" id="GO:0106329">
    <property type="term" value="F:L-phenylalaine oxidase activity"/>
    <property type="evidence" value="ECO:0007669"/>
    <property type="project" value="RHEA"/>
</dbReference>
<dbReference type="GO" id="GO:0090729">
    <property type="term" value="F:toxin activity"/>
    <property type="evidence" value="ECO:0007669"/>
    <property type="project" value="UniProtKB-KW"/>
</dbReference>
<dbReference type="GO" id="GO:0009063">
    <property type="term" value="P:amino acid catabolic process"/>
    <property type="evidence" value="ECO:0007669"/>
    <property type="project" value="TreeGrafter"/>
</dbReference>
<dbReference type="GO" id="GO:0006915">
    <property type="term" value="P:apoptotic process"/>
    <property type="evidence" value="ECO:0007669"/>
    <property type="project" value="UniProtKB-KW"/>
</dbReference>
<dbReference type="GO" id="GO:0042742">
    <property type="term" value="P:defense response to bacterium"/>
    <property type="evidence" value="ECO:0007669"/>
    <property type="project" value="UniProtKB-KW"/>
</dbReference>
<dbReference type="GO" id="GO:0031640">
    <property type="term" value="P:killing of cells of another organism"/>
    <property type="evidence" value="ECO:0007669"/>
    <property type="project" value="UniProtKB-KW"/>
</dbReference>
<dbReference type="FunFam" id="1.10.405.10:FF:000004">
    <property type="entry name" value="Amine oxidase"/>
    <property type="match status" value="1"/>
</dbReference>
<dbReference type="FunFam" id="3.50.50.60:FF:000450">
    <property type="entry name" value="Amine oxidase"/>
    <property type="match status" value="1"/>
</dbReference>
<dbReference type="Gene3D" id="3.90.660.10">
    <property type="match status" value="1"/>
</dbReference>
<dbReference type="Gene3D" id="3.50.50.60">
    <property type="entry name" value="FAD/NAD(P)-binding domain"/>
    <property type="match status" value="1"/>
</dbReference>
<dbReference type="Gene3D" id="1.10.405.10">
    <property type="entry name" value="Guanine Nucleotide Dissociation Inhibitor, domain 1"/>
    <property type="match status" value="1"/>
</dbReference>
<dbReference type="InterPro" id="IPR002937">
    <property type="entry name" value="Amino_oxidase"/>
</dbReference>
<dbReference type="InterPro" id="IPR036188">
    <property type="entry name" value="FAD/NAD-bd_sf"/>
</dbReference>
<dbReference type="InterPro" id="IPR001613">
    <property type="entry name" value="Flavin_amine_oxidase"/>
</dbReference>
<dbReference type="InterPro" id="IPR050281">
    <property type="entry name" value="Flavin_monoamine_oxidase"/>
</dbReference>
<dbReference type="PANTHER" id="PTHR10742:SF355">
    <property type="entry name" value="AMINE OXIDASE"/>
    <property type="match status" value="1"/>
</dbReference>
<dbReference type="PANTHER" id="PTHR10742">
    <property type="entry name" value="FLAVIN MONOAMINE OXIDASE"/>
    <property type="match status" value="1"/>
</dbReference>
<dbReference type="Pfam" id="PF01593">
    <property type="entry name" value="Amino_oxidase"/>
    <property type="match status" value="1"/>
</dbReference>
<dbReference type="PRINTS" id="PR00757">
    <property type="entry name" value="AMINEOXDASEF"/>
</dbReference>
<dbReference type="SUPFAM" id="SSF54373">
    <property type="entry name" value="FAD-linked reductases, C-terminal domain"/>
    <property type="match status" value="1"/>
</dbReference>
<dbReference type="SUPFAM" id="SSF51905">
    <property type="entry name" value="FAD/NAD(P)-binding domain"/>
    <property type="match status" value="1"/>
</dbReference>
<keyword id="KW-0044">Antibiotic</keyword>
<keyword id="KW-0929">Antimicrobial</keyword>
<keyword id="KW-0053">Apoptosis</keyword>
<keyword id="KW-0204">Cytolysis</keyword>
<keyword id="KW-0903">Direct protein sequencing</keyword>
<keyword id="KW-1015">Disulfide bond</keyword>
<keyword id="KW-0274">FAD</keyword>
<keyword id="KW-0285">Flavoprotein</keyword>
<keyword id="KW-0325">Glycoprotein</keyword>
<keyword id="KW-0354">Hemolysis</keyword>
<keyword id="KW-1199">Hemostasis impairing toxin</keyword>
<keyword id="KW-0560">Oxidoreductase</keyword>
<keyword id="KW-1202">Platelet aggregation activating toxin</keyword>
<keyword id="KW-0964">Secreted</keyword>
<keyword id="KW-0732">Signal</keyword>
<keyword id="KW-0800">Toxin</keyword>
<organism>
    <name type="scientific">Bungarus fasciatus</name>
    <name type="common">Banded krait</name>
    <name type="synonym">Pseudoboa fasciata</name>
    <dbReference type="NCBI Taxonomy" id="8613"/>
    <lineage>
        <taxon>Eukaryota</taxon>
        <taxon>Metazoa</taxon>
        <taxon>Chordata</taxon>
        <taxon>Craniata</taxon>
        <taxon>Vertebrata</taxon>
        <taxon>Euteleostomi</taxon>
        <taxon>Lepidosauria</taxon>
        <taxon>Squamata</taxon>
        <taxon>Bifurcata</taxon>
        <taxon>Unidentata</taxon>
        <taxon>Episquamata</taxon>
        <taxon>Toxicofera</taxon>
        <taxon>Serpentes</taxon>
        <taxon>Colubroidea</taxon>
        <taxon>Elapidae</taxon>
        <taxon>Bungarinae</taxon>
        <taxon>Bungarus</taxon>
    </lineage>
</organism>
<comment type="function">
    <text evidence="1 4">Catalyzes an oxidative deamination of predominantly hydrophobic and aromatic L-amino acids, thus producing hydrogen peroxide that may contribute to the diverse toxic effects of this enzyme (PubMed:19393676). Is highly active against L-Tyr, L-Asp, L-Phe, L-Glu, L-Trp, L-His, L-Gln, L-Ile, L-Met, L-Leu and moderately active against L-Lys, L-Arg, L-Ala and L-Asn (PubMed:19393676). Exhibits diverse biological activities, such as edema, inflammatory cell infiltration, cytotoxicity and apoptosis, as well as induction of platelet aggregation (PubMed:19393676). Effects of snake L-amino oxidases on platelets are controversial, since they either induce aggregation or inhibit agonist-induced aggregation. These different effects are probably due to different experimental conditions. This protein may also induce hemorrhage, hemolysis, and have antibacterial and antiparasitic activities.</text>
</comment>
<comment type="catalytic activity">
    <reaction evidence="4">
        <text>an L-alpha-amino acid + O2 + H2O = a 2-oxocarboxylate + H2O2 + NH4(+)</text>
        <dbReference type="Rhea" id="RHEA:13781"/>
        <dbReference type="ChEBI" id="CHEBI:15377"/>
        <dbReference type="ChEBI" id="CHEBI:15379"/>
        <dbReference type="ChEBI" id="CHEBI:16240"/>
        <dbReference type="ChEBI" id="CHEBI:28938"/>
        <dbReference type="ChEBI" id="CHEBI:35179"/>
        <dbReference type="ChEBI" id="CHEBI:59869"/>
        <dbReference type="EC" id="1.4.3.2"/>
    </reaction>
</comment>
<comment type="catalytic activity">
    <reaction evidence="4">
        <text>L-leucine + O2 + H2O = 4-methyl-2-oxopentanoate + H2O2 + NH4(+)</text>
        <dbReference type="Rhea" id="RHEA:60996"/>
        <dbReference type="ChEBI" id="CHEBI:15377"/>
        <dbReference type="ChEBI" id="CHEBI:15379"/>
        <dbReference type="ChEBI" id="CHEBI:16240"/>
        <dbReference type="ChEBI" id="CHEBI:17865"/>
        <dbReference type="ChEBI" id="CHEBI:28938"/>
        <dbReference type="ChEBI" id="CHEBI:57427"/>
    </reaction>
</comment>
<comment type="catalytic activity">
    <reaction evidence="4">
        <text>L-phenylalanine + O2 + H2O = 3-phenylpyruvate + H2O2 + NH4(+)</text>
        <dbReference type="Rhea" id="RHEA:61240"/>
        <dbReference type="ChEBI" id="CHEBI:15377"/>
        <dbReference type="ChEBI" id="CHEBI:15379"/>
        <dbReference type="ChEBI" id="CHEBI:16240"/>
        <dbReference type="ChEBI" id="CHEBI:18005"/>
        <dbReference type="ChEBI" id="CHEBI:28938"/>
        <dbReference type="ChEBI" id="CHEBI:58095"/>
    </reaction>
</comment>
<comment type="catalytic activity">
    <reaction evidence="4">
        <text>L-tryptophan + O2 + H2O = indole-3-pyruvate + H2O2 + NH4(+)</text>
        <dbReference type="Rhea" id="RHEA:61244"/>
        <dbReference type="ChEBI" id="CHEBI:15377"/>
        <dbReference type="ChEBI" id="CHEBI:15379"/>
        <dbReference type="ChEBI" id="CHEBI:16240"/>
        <dbReference type="ChEBI" id="CHEBI:17640"/>
        <dbReference type="ChEBI" id="CHEBI:28938"/>
        <dbReference type="ChEBI" id="CHEBI:57912"/>
    </reaction>
</comment>
<comment type="catalytic activity">
    <reaction evidence="4">
        <text>L-methionine + O2 + H2O = 4-methylsulfanyl-2-oxobutanoate + H2O2 + NH4(+)</text>
        <dbReference type="Rhea" id="RHEA:61236"/>
        <dbReference type="ChEBI" id="CHEBI:15377"/>
        <dbReference type="ChEBI" id="CHEBI:15379"/>
        <dbReference type="ChEBI" id="CHEBI:16240"/>
        <dbReference type="ChEBI" id="CHEBI:16723"/>
        <dbReference type="ChEBI" id="CHEBI:28938"/>
        <dbReference type="ChEBI" id="CHEBI:57844"/>
    </reaction>
</comment>
<comment type="catalytic activity">
    <reaction evidence="4">
        <text>L-isoleucine + O2 + H2O = (S)-3-methyl-2-oxopentanoate + H2O2 + NH4(+)</text>
        <dbReference type="Rhea" id="RHEA:61232"/>
        <dbReference type="ChEBI" id="CHEBI:15377"/>
        <dbReference type="ChEBI" id="CHEBI:15379"/>
        <dbReference type="ChEBI" id="CHEBI:16240"/>
        <dbReference type="ChEBI" id="CHEBI:28938"/>
        <dbReference type="ChEBI" id="CHEBI:35146"/>
        <dbReference type="ChEBI" id="CHEBI:58045"/>
    </reaction>
</comment>
<comment type="catalytic activity">
    <reaction evidence="4">
        <text>L-arginine + O2 + H2O = 5-guanidino-2-oxopentanoate + H2O2 + NH4(+)</text>
        <dbReference type="Rhea" id="RHEA:51404"/>
        <dbReference type="ChEBI" id="CHEBI:15377"/>
        <dbReference type="ChEBI" id="CHEBI:15379"/>
        <dbReference type="ChEBI" id="CHEBI:16240"/>
        <dbReference type="ChEBI" id="CHEBI:28938"/>
        <dbReference type="ChEBI" id="CHEBI:32682"/>
        <dbReference type="ChEBI" id="CHEBI:58489"/>
    </reaction>
</comment>
<comment type="catalytic activity">
    <reaction evidence="4">
        <text>L-aspartate + O2 + H2O = oxaloacetate + H2O2 + NH4(+)</text>
        <dbReference type="Rhea" id="RHEA:19025"/>
        <dbReference type="ChEBI" id="CHEBI:15377"/>
        <dbReference type="ChEBI" id="CHEBI:15379"/>
        <dbReference type="ChEBI" id="CHEBI:16240"/>
        <dbReference type="ChEBI" id="CHEBI:16452"/>
        <dbReference type="ChEBI" id="CHEBI:28938"/>
        <dbReference type="ChEBI" id="CHEBI:29991"/>
    </reaction>
</comment>
<comment type="catalytic activity">
    <reaction evidence="4">
        <text>L-histidine + O2 + H2O = 3-(imidazol-5-yl)pyruvate + H2O2 + NH4(+)</text>
        <dbReference type="Rhea" id="RHEA:61228"/>
        <dbReference type="ChEBI" id="CHEBI:15377"/>
        <dbReference type="ChEBI" id="CHEBI:15379"/>
        <dbReference type="ChEBI" id="CHEBI:16240"/>
        <dbReference type="ChEBI" id="CHEBI:28938"/>
        <dbReference type="ChEBI" id="CHEBI:57595"/>
        <dbReference type="ChEBI" id="CHEBI:58133"/>
    </reaction>
</comment>
<comment type="catalytic activity">
    <reaction evidence="4">
        <text>L-asparagine + O2 + H2O = 2-oxosuccinamate + H2O2 + NH4(+)</text>
        <dbReference type="Rhea" id="RHEA:61224"/>
        <dbReference type="ChEBI" id="CHEBI:15377"/>
        <dbReference type="ChEBI" id="CHEBI:15379"/>
        <dbReference type="ChEBI" id="CHEBI:16240"/>
        <dbReference type="ChEBI" id="CHEBI:28938"/>
        <dbReference type="ChEBI" id="CHEBI:57735"/>
        <dbReference type="ChEBI" id="CHEBI:58048"/>
    </reaction>
</comment>
<comment type="catalytic activity">
    <reaction evidence="4">
        <text>L-tyrosine + O2 + H2O = 3-(4-hydroxyphenyl)pyruvate + H2O2 + NH4(+)</text>
        <dbReference type="Rhea" id="RHEA:61248"/>
        <dbReference type="ChEBI" id="CHEBI:15377"/>
        <dbReference type="ChEBI" id="CHEBI:15379"/>
        <dbReference type="ChEBI" id="CHEBI:16240"/>
        <dbReference type="ChEBI" id="CHEBI:28938"/>
        <dbReference type="ChEBI" id="CHEBI:36242"/>
        <dbReference type="ChEBI" id="CHEBI:58315"/>
    </reaction>
</comment>
<comment type="catalytic activity">
    <reaction evidence="4">
        <text>L-glutamine + O2 + H2O = 2-oxoglutaramate + H2O2 + NH4(+)</text>
        <dbReference type="Rhea" id="RHEA:61260"/>
        <dbReference type="ChEBI" id="CHEBI:15377"/>
        <dbReference type="ChEBI" id="CHEBI:15379"/>
        <dbReference type="ChEBI" id="CHEBI:16240"/>
        <dbReference type="ChEBI" id="CHEBI:16769"/>
        <dbReference type="ChEBI" id="CHEBI:28938"/>
        <dbReference type="ChEBI" id="CHEBI:58359"/>
    </reaction>
</comment>
<comment type="catalytic activity">
    <reaction evidence="4">
        <text>L-alanine + O2 + H2O = pyruvate + H2O2 + NH4(+)</text>
        <dbReference type="Rhea" id="RHEA:61264"/>
        <dbReference type="ChEBI" id="CHEBI:15361"/>
        <dbReference type="ChEBI" id="CHEBI:15377"/>
        <dbReference type="ChEBI" id="CHEBI:15379"/>
        <dbReference type="ChEBI" id="CHEBI:16240"/>
        <dbReference type="ChEBI" id="CHEBI:28938"/>
        <dbReference type="ChEBI" id="CHEBI:57972"/>
    </reaction>
</comment>
<comment type="catalytic activity">
    <reaction evidence="4">
        <text>L-lysine + O2 + H2O = 6-amino-2-oxohexanoate + H2O2 + NH4(+)</text>
        <dbReference type="Rhea" id="RHEA:14437"/>
        <dbReference type="ChEBI" id="CHEBI:15377"/>
        <dbReference type="ChEBI" id="CHEBI:15379"/>
        <dbReference type="ChEBI" id="CHEBI:16240"/>
        <dbReference type="ChEBI" id="CHEBI:28938"/>
        <dbReference type="ChEBI" id="CHEBI:32551"/>
        <dbReference type="ChEBI" id="CHEBI:58183"/>
    </reaction>
</comment>
<comment type="catalytic activity">
    <reaction evidence="4">
        <text>L-glutamate + O2 + H2O = H2O2 + 2-oxoglutarate + NH4(+)</text>
        <dbReference type="Rhea" id="RHEA:20728"/>
        <dbReference type="ChEBI" id="CHEBI:15377"/>
        <dbReference type="ChEBI" id="CHEBI:15379"/>
        <dbReference type="ChEBI" id="CHEBI:16240"/>
        <dbReference type="ChEBI" id="CHEBI:16810"/>
        <dbReference type="ChEBI" id="CHEBI:28938"/>
        <dbReference type="ChEBI" id="CHEBI:29985"/>
    </reaction>
</comment>
<comment type="cofactor">
    <cofactor evidence="2">
        <name>FAD</name>
        <dbReference type="ChEBI" id="CHEBI:57692"/>
    </cofactor>
</comment>
<comment type="biophysicochemical properties">
    <kinetics>
        <KM evidence="4">28.28 mM for L-Ala</KM>
        <KM evidence="4">18.75 mM for L-Arg</KM>
        <KM evidence="4">0.04 mM for L-Asp</KM>
        <KM evidence="4">19.07 mM for L-Asn</KM>
        <KM evidence="4">5.88 mM for L-Gln</KM>
        <KM evidence="4">1.44 mM for L-Glu</KM>
        <KM evidence="4">4.84 mM for L-His</KM>
        <KM evidence="4">1.64 mM for L-Ile</KM>
        <KM evidence="4">60.69 mM for L-Leu</KM>
        <KM evidence="4">21.49 mM for L-Lys</KM>
        <KM evidence="4">15.03 mM for L-Met</KM>
        <KM evidence="4">0.13 mM for L-Phe</KM>
        <KM evidence="4">0.27 mM for L-Trp</KM>
        <KM evidence="4">0.05 mM for L-Tyr</KM>
    </kinetics>
</comment>
<comment type="subunit">
    <text evidence="4">Monomer. This is in contrast with most of its orthologs, that are non-covalently linked homodimers.</text>
</comment>
<comment type="subcellular location">
    <subcellularLocation>
        <location evidence="4">Secreted</location>
    </subcellularLocation>
</comment>
<comment type="tissue specificity">
    <text evidence="7">Expressed by the venom gland.</text>
</comment>
<comment type="PTM">
    <text evidence="2">N-glycosylated.</text>
</comment>
<comment type="similarity">
    <text evidence="6">Belongs to the flavin monoamine oxidase family. FIG1 subfamily.</text>
</comment>
<feature type="signal peptide" evidence="4">
    <location>
        <begin position="1"/>
        <end position="19"/>
    </location>
</feature>
<feature type="chain" id="PRO_0000412599" description="L-amino-acid oxidase">
    <location>
        <begin position="20"/>
        <end position="517"/>
    </location>
</feature>
<feature type="binding site" evidence="2">
    <location>
        <begin position="62"/>
        <end position="63"/>
    </location>
    <ligand>
        <name>FAD</name>
        <dbReference type="ChEBI" id="CHEBI:57692"/>
    </ligand>
</feature>
<feature type="binding site" evidence="2">
    <location>
        <begin position="82"/>
        <end position="83"/>
    </location>
    <ligand>
        <name>FAD</name>
        <dbReference type="ChEBI" id="CHEBI:57692"/>
    </ligand>
</feature>
<feature type="binding site" evidence="2">
    <location>
        <position position="90"/>
    </location>
    <ligand>
        <name>FAD</name>
        <dbReference type="ChEBI" id="CHEBI:57692"/>
    </ligand>
</feature>
<feature type="binding site" evidence="2">
    <location>
        <begin position="106"/>
        <end position="109"/>
    </location>
    <ligand>
        <name>FAD</name>
        <dbReference type="ChEBI" id="CHEBI:57692"/>
    </ligand>
</feature>
<feature type="binding site" evidence="2">
    <location>
        <position position="109"/>
    </location>
    <ligand>
        <name>substrate</name>
    </ligand>
</feature>
<feature type="binding site" evidence="2">
    <location>
        <position position="280"/>
    </location>
    <ligand>
        <name>FAD</name>
        <dbReference type="ChEBI" id="CHEBI:57692"/>
    </ligand>
</feature>
<feature type="binding site" evidence="2">
    <location>
        <position position="391"/>
    </location>
    <ligand>
        <name>substrate</name>
    </ligand>
</feature>
<feature type="binding site" evidence="2">
    <location>
        <position position="476"/>
    </location>
    <ligand>
        <name>FAD</name>
        <dbReference type="ChEBI" id="CHEBI:57692"/>
    </ligand>
</feature>
<feature type="binding site" evidence="2">
    <location>
        <begin position="483"/>
        <end position="488"/>
    </location>
    <ligand>
        <name>FAD</name>
        <dbReference type="ChEBI" id="CHEBI:57692"/>
    </ligand>
</feature>
<feature type="binding site" evidence="2">
    <location>
        <begin position="483"/>
        <end position="484"/>
    </location>
    <ligand>
        <name>substrate</name>
    </ligand>
</feature>
<feature type="glycosylation site" description="N-linked (GlcNAc...) asparagine" evidence="3">
    <location>
        <position position="191"/>
    </location>
</feature>
<feature type="glycosylation site" description="N-linked (GlcNAc...) asparagine" evidence="3">
    <location>
        <position position="380"/>
    </location>
</feature>
<feature type="disulfide bond" evidence="2">
    <location>
        <begin position="29"/>
        <end position="192"/>
    </location>
</feature>
<feature type="disulfide bond" evidence="2">
    <location>
        <begin position="350"/>
        <end position="431"/>
    </location>
</feature>
<protein>
    <recommendedName>
        <fullName>L-amino-acid oxidase</fullName>
        <shortName evidence="5">Bf-LAAO</shortName>
        <shortName>LAO</shortName>
        <ecNumber evidence="4">1.4.3.2</ecNumber>
    </recommendedName>
</protein>
<proteinExistence type="evidence at protein level"/>
<accession>A8QL52</accession>